<comment type="function">
    <text evidence="1">With S4 and S12 plays an important role in translational accuracy.</text>
</comment>
<comment type="subunit">
    <text evidence="1">Part of the 30S ribosomal subunit. Contacts protein S4 (By similarity).</text>
</comment>
<comment type="subcellular location">
    <subcellularLocation>
        <location>Plastid</location>
        <location>Chloroplast</location>
    </subcellularLocation>
</comment>
<comment type="domain">
    <text>The N-terminal domain interacts with the head of the 30S subunit; the C-terminal domain interacts with the body and contacts protein S4. The interaction surface between S4 and S5 is involved in control of translational fidelity.</text>
</comment>
<comment type="similarity">
    <text evidence="2">Belongs to the universal ribosomal protein uS5 family.</text>
</comment>
<organism>
    <name type="scientific">Cyanidioschyzon merolae (strain NIES-3377 / 10D)</name>
    <name type="common">Unicellular red alga</name>
    <dbReference type="NCBI Taxonomy" id="280699"/>
    <lineage>
        <taxon>Eukaryota</taxon>
        <taxon>Rhodophyta</taxon>
        <taxon>Bangiophyceae</taxon>
        <taxon>Cyanidiales</taxon>
        <taxon>Cyanidiaceae</taxon>
        <taxon>Cyanidioschyzon</taxon>
    </lineage>
</organism>
<feature type="chain" id="PRO_0000293223" description="Small ribosomal subunit protein uS5c">
    <location>
        <begin position="1"/>
        <end position="153"/>
    </location>
</feature>
<feature type="domain" description="S5 DRBM">
    <location>
        <begin position="11"/>
        <end position="74"/>
    </location>
</feature>
<dbReference type="EMBL" id="AB002583">
    <property type="protein sequence ID" value="BAC76247.1"/>
    <property type="molecule type" value="Genomic_DNA"/>
</dbReference>
<dbReference type="RefSeq" id="NP_849085.1">
    <property type="nucleotide sequence ID" value="NC_004799.1"/>
</dbReference>
<dbReference type="SMR" id="Q85FU7"/>
<dbReference type="STRING" id="280699.Q85FU7"/>
<dbReference type="EnsemblPlants" id="CMV180CT">
    <property type="protein sequence ID" value="CMV180CT"/>
    <property type="gene ID" value="CMV180C"/>
</dbReference>
<dbReference type="GeneID" id="845012"/>
<dbReference type="Gramene" id="CMV180CT">
    <property type="protein sequence ID" value="CMV180CT"/>
    <property type="gene ID" value="CMV180C"/>
</dbReference>
<dbReference type="KEGG" id="cme:CymeCp153"/>
<dbReference type="eggNOG" id="KOG0877">
    <property type="taxonomic scope" value="Eukaryota"/>
</dbReference>
<dbReference type="HOGENOM" id="CLU_065898_2_2_1"/>
<dbReference type="Proteomes" id="UP000007014">
    <property type="component" value="Chloroplast"/>
</dbReference>
<dbReference type="GO" id="GO:0009507">
    <property type="term" value="C:chloroplast"/>
    <property type="evidence" value="ECO:0007669"/>
    <property type="project" value="UniProtKB-SubCell"/>
</dbReference>
<dbReference type="GO" id="GO:0015935">
    <property type="term" value="C:small ribosomal subunit"/>
    <property type="evidence" value="ECO:0007669"/>
    <property type="project" value="InterPro"/>
</dbReference>
<dbReference type="GO" id="GO:0019843">
    <property type="term" value="F:rRNA binding"/>
    <property type="evidence" value="ECO:0007669"/>
    <property type="project" value="UniProtKB-UniRule"/>
</dbReference>
<dbReference type="GO" id="GO:0003735">
    <property type="term" value="F:structural constituent of ribosome"/>
    <property type="evidence" value="ECO:0007669"/>
    <property type="project" value="InterPro"/>
</dbReference>
<dbReference type="GO" id="GO:0006412">
    <property type="term" value="P:translation"/>
    <property type="evidence" value="ECO:0007669"/>
    <property type="project" value="UniProtKB-UniRule"/>
</dbReference>
<dbReference type="FunFam" id="3.30.160.20:FF:000001">
    <property type="entry name" value="30S ribosomal protein S5"/>
    <property type="match status" value="1"/>
</dbReference>
<dbReference type="FunFam" id="3.30.230.10:FF:000002">
    <property type="entry name" value="30S ribosomal protein S5"/>
    <property type="match status" value="1"/>
</dbReference>
<dbReference type="Gene3D" id="3.30.160.20">
    <property type="match status" value="1"/>
</dbReference>
<dbReference type="Gene3D" id="3.30.230.10">
    <property type="match status" value="1"/>
</dbReference>
<dbReference type="HAMAP" id="MF_01307_B">
    <property type="entry name" value="Ribosomal_uS5_B"/>
    <property type="match status" value="1"/>
</dbReference>
<dbReference type="InterPro" id="IPR020568">
    <property type="entry name" value="Ribosomal_Su5_D2-typ_SF"/>
</dbReference>
<dbReference type="InterPro" id="IPR000851">
    <property type="entry name" value="Ribosomal_uS5"/>
</dbReference>
<dbReference type="InterPro" id="IPR005712">
    <property type="entry name" value="Ribosomal_uS5_bac-type"/>
</dbReference>
<dbReference type="InterPro" id="IPR005324">
    <property type="entry name" value="Ribosomal_uS5_C"/>
</dbReference>
<dbReference type="InterPro" id="IPR013810">
    <property type="entry name" value="Ribosomal_uS5_N"/>
</dbReference>
<dbReference type="InterPro" id="IPR018192">
    <property type="entry name" value="Ribosomal_uS5_N_CS"/>
</dbReference>
<dbReference type="InterPro" id="IPR014721">
    <property type="entry name" value="Ribsml_uS5_D2-typ_fold_subgr"/>
</dbReference>
<dbReference type="NCBIfam" id="TIGR01021">
    <property type="entry name" value="rpsE_bact"/>
    <property type="match status" value="1"/>
</dbReference>
<dbReference type="PANTHER" id="PTHR48277">
    <property type="entry name" value="MITOCHONDRIAL RIBOSOMAL PROTEIN S5"/>
    <property type="match status" value="1"/>
</dbReference>
<dbReference type="PANTHER" id="PTHR48277:SF1">
    <property type="entry name" value="MITOCHONDRIAL RIBOSOMAL PROTEIN S5"/>
    <property type="match status" value="1"/>
</dbReference>
<dbReference type="Pfam" id="PF00333">
    <property type="entry name" value="Ribosomal_S5"/>
    <property type="match status" value="1"/>
</dbReference>
<dbReference type="Pfam" id="PF03719">
    <property type="entry name" value="Ribosomal_S5_C"/>
    <property type="match status" value="1"/>
</dbReference>
<dbReference type="SUPFAM" id="SSF54768">
    <property type="entry name" value="dsRNA-binding domain-like"/>
    <property type="match status" value="1"/>
</dbReference>
<dbReference type="SUPFAM" id="SSF54211">
    <property type="entry name" value="Ribosomal protein S5 domain 2-like"/>
    <property type="match status" value="1"/>
</dbReference>
<dbReference type="PROSITE" id="PS00585">
    <property type="entry name" value="RIBOSOMAL_S5"/>
    <property type="match status" value="1"/>
</dbReference>
<dbReference type="PROSITE" id="PS50881">
    <property type="entry name" value="S5_DSRBD"/>
    <property type="match status" value="1"/>
</dbReference>
<keyword id="KW-0150">Chloroplast</keyword>
<keyword id="KW-0934">Plastid</keyword>
<keyword id="KW-1185">Reference proteome</keyword>
<keyword id="KW-0687">Ribonucleoprotein</keyword>
<keyword id="KW-0689">Ribosomal protein</keyword>
<keyword id="KW-0694">RNA-binding</keyword>
<keyword id="KW-0699">rRNA-binding</keyword>
<geneLocation type="chloroplast"/>
<name>RR5_CYAM1</name>
<accession>Q85FU7</accession>
<reference key="1">
    <citation type="journal article" date="2003" name="DNA Res.">
        <title>Complete sequence and analysis of the plastid genome of the unicellular red alga Cyanidioschyzon merolae.</title>
        <authorList>
            <person name="Ohta N."/>
            <person name="Matsuzaki M."/>
            <person name="Misumi O."/>
            <person name="Miyagishima S.-Y."/>
            <person name="Nozaki H."/>
            <person name="Tanaka K."/>
            <person name="Shin-i T."/>
            <person name="Kohara Y."/>
            <person name="Kuroiwa T."/>
        </authorList>
    </citation>
    <scope>NUCLEOTIDE SEQUENCE [LARGE SCALE GENOMIC DNA]</scope>
    <source>
        <strain>NIES-3377 / 10D</strain>
    </source>
</reference>
<sequence>MQNMNEQQEQWQERVIQIRRVAKVVKGGKKLSFRVLVVVGNLNGCVGVGMGKAADVMSAVTKAVVDAKKQLINITLTPTNSIVHASQGRFSAAVVFLKPAASGSGVIAGGAVRSVMELAGIQNVLSKQLGGSNPLNNAKAALLALKSSSANAR</sequence>
<protein>
    <recommendedName>
        <fullName evidence="2">Small ribosomal subunit protein uS5c</fullName>
    </recommendedName>
    <alternativeName>
        <fullName>30S ribosomal protein S5, chloroplastic</fullName>
    </alternativeName>
</protein>
<proteinExistence type="inferred from homology"/>
<evidence type="ECO:0000250" key="1"/>
<evidence type="ECO:0000305" key="2"/>
<gene>
    <name type="primary">rps5</name>
</gene>